<sequence length="290" mass="32809">MLKTIQDKARHRTRPLWAWLKLLWQRIDEDNMTTLAGNLAYVSLLSLVPLVAVVFALFAAFPMFSDVSIQLRHFIFANFLPATGDVIQRYIEQFVANSNKMTAVGACGLIVTALLLMYSIDSALNAIWRSKRARPKIYSFAVYWMILTLGPLLAGASLAISSYLLSLRWASDLNTVIDNVLRIFPLLLSWISFWLLYSIVPTIRVPNRDAIVGAFVAALLFEAGKKGFALYITMFPSYQLIYGVLAVIPILFVWVYWTWCIVLLGAEITVTLGEYRKLKQAAEQEEDDEP</sequence>
<dbReference type="EMBL" id="CU928164">
    <property type="protein sequence ID" value="CAR19233.1"/>
    <property type="molecule type" value="Genomic_DNA"/>
</dbReference>
<dbReference type="RefSeq" id="WP_000920751.1">
    <property type="nucleotide sequence ID" value="NC_011750.1"/>
</dbReference>
<dbReference type="RefSeq" id="YP_002409043.1">
    <property type="nucleotide sequence ID" value="NC_011750.1"/>
</dbReference>
<dbReference type="STRING" id="585057.ECIAI39_3114"/>
<dbReference type="KEGG" id="ect:ECIAI39_3114"/>
<dbReference type="PATRIC" id="fig|585057.6.peg.3230"/>
<dbReference type="HOGENOM" id="CLU_032288_0_0_6"/>
<dbReference type="Proteomes" id="UP000000749">
    <property type="component" value="Chromosome"/>
</dbReference>
<dbReference type="GO" id="GO:0005886">
    <property type="term" value="C:plasma membrane"/>
    <property type="evidence" value="ECO:0007669"/>
    <property type="project" value="UniProtKB-SubCell"/>
</dbReference>
<dbReference type="HAMAP" id="MF_00672">
    <property type="entry name" value="UPF0761"/>
    <property type="match status" value="1"/>
</dbReference>
<dbReference type="InterPro" id="IPR023679">
    <property type="entry name" value="UPF0761_bac"/>
</dbReference>
<dbReference type="InterPro" id="IPR017039">
    <property type="entry name" value="Virul_fac_BrkB"/>
</dbReference>
<dbReference type="NCBIfam" id="NF002457">
    <property type="entry name" value="PRK01637.1"/>
    <property type="match status" value="1"/>
</dbReference>
<dbReference type="NCBIfam" id="TIGR00765">
    <property type="entry name" value="yihY_not_rbn"/>
    <property type="match status" value="1"/>
</dbReference>
<dbReference type="PANTHER" id="PTHR30213">
    <property type="entry name" value="INNER MEMBRANE PROTEIN YHJD"/>
    <property type="match status" value="1"/>
</dbReference>
<dbReference type="PANTHER" id="PTHR30213:SF0">
    <property type="entry name" value="UPF0761 MEMBRANE PROTEIN YIHY"/>
    <property type="match status" value="1"/>
</dbReference>
<dbReference type="Pfam" id="PF03631">
    <property type="entry name" value="Virul_fac_BrkB"/>
    <property type="match status" value="1"/>
</dbReference>
<dbReference type="PIRSF" id="PIRSF035875">
    <property type="entry name" value="RNase_BN"/>
    <property type="match status" value="1"/>
</dbReference>
<reference key="1">
    <citation type="journal article" date="2009" name="PLoS Genet.">
        <title>Organised genome dynamics in the Escherichia coli species results in highly diverse adaptive paths.</title>
        <authorList>
            <person name="Touchon M."/>
            <person name="Hoede C."/>
            <person name="Tenaillon O."/>
            <person name="Barbe V."/>
            <person name="Baeriswyl S."/>
            <person name="Bidet P."/>
            <person name="Bingen E."/>
            <person name="Bonacorsi S."/>
            <person name="Bouchier C."/>
            <person name="Bouvet O."/>
            <person name="Calteau A."/>
            <person name="Chiapello H."/>
            <person name="Clermont O."/>
            <person name="Cruveiller S."/>
            <person name="Danchin A."/>
            <person name="Diard M."/>
            <person name="Dossat C."/>
            <person name="Karoui M.E."/>
            <person name="Frapy E."/>
            <person name="Garry L."/>
            <person name="Ghigo J.M."/>
            <person name="Gilles A.M."/>
            <person name="Johnson J."/>
            <person name="Le Bouguenec C."/>
            <person name="Lescat M."/>
            <person name="Mangenot S."/>
            <person name="Martinez-Jehanne V."/>
            <person name="Matic I."/>
            <person name="Nassif X."/>
            <person name="Oztas S."/>
            <person name="Petit M.A."/>
            <person name="Pichon C."/>
            <person name="Rouy Z."/>
            <person name="Ruf C.S."/>
            <person name="Schneider D."/>
            <person name="Tourret J."/>
            <person name="Vacherie B."/>
            <person name="Vallenet D."/>
            <person name="Medigue C."/>
            <person name="Rocha E.P.C."/>
            <person name="Denamur E."/>
        </authorList>
    </citation>
    <scope>NUCLEOTIDE SEQUENCE [LARGE SCALE GENOMIC DNA]</scope>
    <source>
        <strain>IAI39 / ExPEC</strain>
    </source>
</reference>
<proteinExistence type="inferred from homology"/>
<gene>
    <name evidence="1" type="primary">yihY</name>
    <name type="ordered locus">ECIAI39_3114</name>
</gene>
<accession>B7NUY5</accession>
<protein>
    <recommendedName>
        <fullName evidence="1">UPF0761 membrane protein YihY</fullName>
    </recommendedName>
</protein>
<comment type="subcellular location">
    <subcellularLocation>
        <location evidence="1">Cell inner membrane</location>
        <topology evidence="1">Multi-pass membrane protein</topology>
    </subcellularLocation>
</comment>
<comment type="similarity">
    <text evidence="1">Belongs to the UPF0761 family.</text>
</comment>
<feature type="chain" id="PRO_1000131548" description="UPF0761 membrane protein YihY">
    <location>
        <begin position="1"/>
        <end position="290"/>
    </location>
</feature>
<feature type="transmembrane region" description="Helical" evidence="1">
    <location>
        <begin position="44"/>
        <end position="64"/>
    </location>
</feature>
<feature type="transmembrane region" description="Helical" evidence="1">
    <location>
        <begin position="104"/>
        <end position="124"/>
    </location>
</feature>
<feature type="transmembrane region" description="Helical" evidence="1">
    <location>
        <begin position="140"/>
        <end position="160"/>
    </location>
</feature>
<feature type="transmembrane region" description="Helical" evidence="1">
    <location>
        <begin position="183"/>
        <end position="203"/>
    </location>
</feature>
<feature type="transmembrane region" description="Helical" evidence="1">
    <location>
        <begin position="210"/>
        <end position="230"/>
    </location>
</feature>
<feature type="transmembrane region" description="Helical" evidence="1">
    <location>
        <begin position="244"/>
        <end position="264"/>
    </location>
</feature>
<name>YIHY_ECO7I</name>
<keyword id="KW-0997">Cell inner membrane</keyword>
<keyword id="KW-1003">Cell membrane</keyword>
<keyword id="KW-0472">Membrane</keyword>
<keyword id="KW-0812">Transmembrane</keyword>
<keyword id="KW-1133">Transmembrane helix</keyword>
<organism>
    <name type="scientific">Escherichia coli O7:K1 (strain IAI39 / ExPEC)</name>
    <dbReference type="NCBI Taxonomy" id="585057"/>
    <lineage>
        <taxon>Bacteria</taxon>
        <taxon>Pseudomonadati</taxon>
        <taxon>Pseudomonadota</taxon>
        <taxon>Gammaproteobacteria</taxon>
        <taxon>Enterobacterales</taxon>
        <taxon>Enterobacteriaceae</taxon>
        <taxon>Escherichia</taxon>
    </lineage>
</organism>
<evidence type="ECO:0000255" key="1">
    <source>
        <dbReference type="HAMAP-Rule" id="MF_00672"/>
    </source>
</evidence>